<feature type="chain" id="PRO_0000368983" description="ATP synthase subunit b, chloroplastic">
    <location>
        <begin position="1"/>
        <end position="185"/>
    </location>
</feature>
<feature type="transmembrane region" description="Helical" evidence="1">
    <location>
        <begin position="27"/>
        <end position="49"/>
    </location>
</feature>
<evidence type="ECO:0000255" key="1">
    <source>
        <dbReference type="HAMAP-Rule" id="MF_01398"/>
    </source>
</evidence>
<reference key="1">
    <citation type="journal article" date="2006" name="BMC Evol. Biol.">
        <title>Phylogenetic analyses of Vitis (Vitaceae) based on complete chloroplast genome sequences: effects of taxon sampling and phylogenetic methods on resolving relationships among rosids.</title>
        <authorList>
            <person name="Jansen R.K."/>
            <person name="Kaittanis C."/>
            <person name="Lee S.-B."/>
            <person name="Saski C."/>
            <person name="Tomkins J."/>
            <person name="Alverson A.J."/>
            <person name="Daniell H."/>
        </authorList>
    </citation>
    <scope>NUCLEOTIDE SEQUENCE [LARGE SCALE GENOMIC DNA]</scope>
    <source>
        <strain>cv. Maxxa</strain>
    </source>
</reference>
<name>ATPF_VITVI</name>
<comment type="function">
    <text evidence="1">F(1)F(0) ATP synthase produces ATP from ADP in the presence of a proton or sodium gradient. F-type ATPases consist of two structural domains, F(1) containing the extramembraneous catalytic core and F(0) containing the membrane proton channel, linked together by a central stalk and a peripheral stalk. During catalysis, ATP synthesis in the catalytic domain of F(1) is coupled via a rotary mechanism of the central stalk subunits to proton translocation.</text>
</comment>
<comment type="function">
    <text evidence="1">Component of the F(0) channel, it forms part of the peripheral stalk, linking F(1) to F(0).</text>
</comment>
<comment type="subunit">
    <text evidence="1">F-type ATPases have 2 components, F(1) - the catalytic core - and F(0) - the membrane proton channel. F(1) has five subunits: alpha(3), beta(3), gamma(1), delta(1), epsilon(1). F(0) has four main subunits: a(1), b(1), b'(1) and c(10-14). The alpha and beta chains form an alternating ring which encloses part of the gamma chain. F(1) is attached to F(0) by a central stalk formed by the gamma and epsilon chains, while a peripheral stalk is formed by the delta, b and b' chains.</text>
</comment>
<comment type="subcellular location">
    <subcellularLocation>
        <location evidence="1">Plastid</location>
        <location evidence="1">Chloroplast thylakoid membrane</location>
        <topology evidence="1">Single-pass membrane protein</topology>
    </subcellularLocation>
</comment>
<comment type="miscellaneous">
    <text>In plastids the F-type ATPase is also known as CF(1)CF(0).</text>
</comment>
<comment type="similarity">
    <text evidence="1">Belongs to the ATPase B chain family.</text>
</comment>
<geneLocation type="chloroplast"/>
<protein>
    <recommendedName>
        <fullName evidence="1">ATP synthase subunit b, chloroplastic</fullName>
    </recommendedName>
    <alternativeName>
        <fullName evidence="1">ATP synthase F(0) sector subunit b</fullName>
    </alternativeName>
    <alternativeName>
        <fullName evidence="1">ATPase subunit I</fullName>
    </alternativeName>
</protein>
<accession>Q0ZJ34</accession>
<keyword id="KW-0066">ATP synthesis</keyword>
<keyword id="KW-0138">CF(0)</keyword>
<keyword id="KW-0150">Chloroplast</keyword>
<keyword id="KW-0375">Hydrogen ion transport</keyword>
<keyword id="KW-0406">Ion transport</keyword>
<keyword id="KW-0472">Membrane</keyword>
<keyword id="KW-0934">Plastid</keyword>
<keyword id="KW-1185">Reference proteome</keyword>
<keyword id="KW-0793">Thylakoid</keyword>
<keyword id="KW-0812">Transmembrane</keyword>
<keyword id="KW-1133">Transmembrane helix</keyword>
<keyword id="KW-0813">Transport</keyword>
<proteinExistence type="inferred from homology"/>
<organism>
    <name type="scientific">Vitis vinifera</name>
    <name type="common">Grape</name>
    <dbReference type="NCBI Taxonomy" id="29760"/>
    <lineage>
        <taxon>Eukaryota</taxon>
        <taxon>Viridiplantae</taxon>
        <taxon>Streptophyta</taxon>
        <taxon>Embryophyta</taxon>
        <taxon>Tracheophyta</taxon>
        <taxon>Spermatophyta</taxon>
        <taxon>Magnoliopsida</taxon>
        <taxon>eudicotyledons</taxon>
        <taxon>Gunneridae</taxon>
        <taxon>Pentapetalae</taxon>
        <taxon>rosids</taxon>
        <taxon>Vitales</taxon>
        <taxon>Vitaceae</taxon>
        <taxon>Viteae</taxon>
        <taxon>Vitis</taxon>
    </lineage>
</organism>
<gene>
    <name evidence="1" type="primary">atpF</name>
</gene>
<sequence>MKNVTDSFVSLGHWPSAGGFGFNTDILATNPINLSVVLGVLIFFGKGVLSDLLDNRKQRILNTIRNSEELREGAIEQLEKARARLRKVEMEADQYRVNGYSEIEREKLNLINSTYNTLEQLENYKNETIHFEQQRAINQVRQRVLQQALQGALGTINSCLNKELHLRTISANIGMFGSMKEIRNN</sequence>
<dbReference type="EMBL" id="DQ424856">
    <property type="protein sequence ID" value="ABE47520.1"/>
    <property type="molecule type" value="Genomic_DNA"/>
</dbReference>
<dbReference type="RefSeq" id="YP_567062.1">
    <property type="nucleotide sequence ID" value="NC_007957.1"/>
</dbReference>
<dbReference type="SMR" id="Q0ZJ34"/>
<dbReference type="FunCoup" id="Q0ZJ34">
    <property type="interactions" value="216"/>
</dbReference>
<dbReference type="STRING" id="29760.Q0ZJ34"/>
<dbReference type="GeneID" id="4025115"/>
<dbReference type="KEGG" id="vvi:4025115"/>
<dbReference type="InParanoid" id="Q0ZJ34"/>
<dbReference type="OrthoDB" id="917145at71240"/>
<dbReference type="Proteomes" id="UP000009183">
    <property type="component" value="Chloroplast"/>
</dbReference>
<dbReference type="GO" id="GO:0009535">
    <property type="term" value="C:chloroplast thylakoid membrane"/>
    <property type="evidence" value="ECO:0007669"/>
    <property type="project" value="UniProtKB-SubCell"/>
</dbReference>
<dbReference type="GO" id="GO:0045259">
    <property type="term" value="C:proton-transporting ATP synthase complex"/>
    <property type="evidence" value="ECO:0007669"/>
    <property type="project" value="UniProtKB-KW"/>
</dbReference>
<dbReference type="GO" id="GO:0046933">
    <property type="term" value="F:proton-transporting ATP synthase activity, rotational mechanism"/>
    <property type="evidence" value="ECO:0007669"/>
    <property type="project" value="UniProtKB-UniRule"/>
</dbReference>
<dbReference type="CDD" id="cd06503">
    <property type="entry name" value="ATP-synt_Fo_b"/>
    <property type="match status" value="1"/>
</dbReference>
<dbReference type="HAMAP" id="MF_01398">
    <property type="entry name" value="ATP_synth_b_bprime"/>
    <property type="match status" value="1"/>
</dbReference>
<dbReference type="InterPro" id="IPR002146">
    <property type="entry name" value="ATP_synth_b/b'su_bac/chlpt"/>
</dbReference>
<dbReference type="PANTHER" id="PTHR34264">
    <property type="entry name" value="ATP SYNTHASE SUBUNIT B, CHLOROPLASTIC"/>
    <property type="match status" value="1"/>
</dbReference>
<dbReference type="PANTHER" id="PTHR34264:SF3">
    <property type="entry name" value="ATP SYNTHASE SUBUNIT B, CHLOROPLASTIC"/>
    <property type="match status" value="1"/>
</dbReference>
<dbReference type="Pfam" id="PF00430">
    <property type="entry name" value="ATP-synt_B"/>
    <property type="match status" value="1"/>
</dbReference>